<sequence>MITTVVGSYPVVKKEETFLDKVKKVFGLYDEYKYAIERAVKDQVKAGVNIISDGQVRGDMVEIFTNNMYGFDGKRVVGRVEFIKPITLKDILYAKSIAKKLNPNVEIKGIITGPCTIASSVRVESCYSDNRDENLIYDIAKALRKEVEALKKHVPIIQIDEPILSTGMYDFDVARKAIDIIVDGLNIKFAMHVCGNVYNIIDELNKFNVDILDHEFASNKKNLVILESMEKKVGFGCVNTKVKKVESVEEIKSLIEEGIEILKNNEKLNKNLSDNILIDPDCGMRLLPIDVAFNKLKNMVEATKLIKI</sequence>
<proteinExistence type="inferred from homology"/>
<protein>
    <recommendedName>
        <fullName evidence="1">Methionine synthase</fullName>
        <ecNumber evidence="1">2.1.1.-</ecNumber>
    </recommendedName>
    <alternativeName>
        <fullName evidence="1">Homocysteine methyltransferase</fullName>
    </alternativeName>
    <alternativeName>
        <fullName evidence="1">Methylcobalamin:homocysteine methyltransferase</fullName>
    </alternativeName>
</protein>
<feature type="chain" id="PRO_0000098684" description="Methionine synthase">
    <location>
        <begin position="1"/>
        <end position="308"/>
    </location>
</feature>
<feature type="binding site" evidence="1">
    <location>
        <position position="192"/>
    </location>
    <ligand>
        <name>Zn(2+)</name>
        <dbReference type="ChEBI" id="CHEBI:29105"/>
        <note>catalytic</note>
    </ligand>
</feature>
<feature type="binding site" evidence="1">
    <location>
        <position position="194"/>
    </location>
    <ligand>
        <name>Zn(2+)</name>
        <dbReference type="ChEBI" id="CHEBI:29105"/>
        <note>catalytic</note>
    </ligand>
</feature>
<feature type="binding site" evidence="1">
    <location>
        <position position="215"/>
    </location>
    <ligand>
        <name>Zn(2+)</name>
        <dbReference type="ChEBI" id="CHEBI:29105"/>
        <note>catalytic</note>
    </ligand>
</feature>
<feature type="binding site" evidence="1">
    <location>
        <position position="282"/>
    </location>
    <ligand>
        <name>Zn(2+)</name>
        <dbReference type="ChEBI" id="CHEBI:29105"/>
        <note>catalytic</note>
    </ligand>
</feature>
<name>METE_METJA</name>
<organism>
    <name type="scientific">Methanocaldococcus jannaschii (strain ATCC 43067 / DSM 2661 / JAL-1 / JCM 10045 / NBRC 100440)</name>
    <name type="common">Methanococcus jannaschii</name>
    <dbReference type="NCBI Taxonomy" id="243232"/>
    <lineage>
        <taxon>Archaea</taxon>
        <taxon>Methanobacteriati</taxon>
        <taxon>Methanobacteriota</taxon>
        <taxon>Methanomada group</taxon>
        <taxon>Methanococci</taxon>
        <taxon>Methanococcales</taxon>
        <taxon>Methanocaldococcaceae</taxon>
        <taxon>Methanocaldococcus</taxon>
    </lineage>
</organism>
<gene>
    <name evidence="1" type="primary">metE</name>
    <name type="ordered locus">MJ1473</name>
</gene>
<keyword id="KW-0028">Amino-acid biosynthesis</keyword>
<keyword id="KW-0479">Metal-binding</keyword>
<keyword id="KW-0486">Methionine biosynthesis</keyword>
<keyword id="KW-0489">Methyltransferase</keyword>
<keyword id="KW-1185">Reference proteome</keyword>
<keyword id="KW-0808">Transferase</keyword>
<keyword id="KW-0862">Zinc</keyword>
<comment type="function">
    <text evidence="1">Catalyzes the transfer of a methyl group to L-homocysteine resulting in methionine formation. Can use methylcobalamin and methylcobinamide as methyl donors, but methylcobalamin is not considered to be the physiological substrate.</text>
</comment>
<comment type="cofactor">
    <cofactor evidence="1">
        <name>Zn(2+)</name>
        <dbReference type="ChEBI" id="CHEBI:29105"/>
    </cofactor>
    <text evidence="1">Binds 1 zinc ion per subunit.</text>
</comment>
<comment type="pathway">
    <text evidence="1">Amino-acid biosynthesis; L-methionine biosynthesis via de novo pathway.</text>
</comment>
<comment type="similarity">
    <text evidence="1 2">Belongs to the archaeal MetE family.</text>
</comment>
<comment type="sequence caution" evidence="2">
    <conflict type="erroneous initiation">
        <sequence resource="EMBL-CDS" id="AAB99479"/>
    </conflict>
</comment>
<reference key="1">
    <citation type="journal article" date="1996" name="Science">
        <title>Complete genome sequence of the methanogenic archaeon, Methanococcus jannaschii.</title>
        <authorList>
            <person name="Bult C.J."/>
            <person name="White O."/>
            <person name="Olsen G.J."/>
            <person name="Zhou L."/>
            <person name="Fleischmann R.D."/>
            <person name="Sutton G.G."/>
            <person name="Blake J.A."/>
            <person name="FitzGerald L.M."/>
            <person name="Clayton R.A."/>
            <person name="Gocayne J.D."/>
            <person name="Kerlavage A.R."/>
            <person name="Dougherty B.A."/>
            <person name="Tomb J.-F."/>
            <person name="Adams M.D."/>
            <person name="Reich C.I."/>
            <person name="Overbeek R."/>
            <person name="Kirkness E.F."/>
            <person name="Weinstock K.G."/>
            <person name="Merrick J.M."/>
            <person name="Glodek A."/>
            <person name="Scott J.L."/>
            <person name="Geoghagen N.S.M."/>
            <person name="Weidman J.F."/>
            <person name="Fuhrmann J.L."/>
            <person name="Nguyen D."/>
            <person name="Utterback T.R."/>
            <person name="Kelley J.M."/>
            <person name="Peterson J.D."/>
            <person name="Sadow P.W."/>
            <person name="Hanna M.C."/>
            <person name="Cotton M.D."/>
            <person name="Roberts K.M."/>
            <person name="Hurst M.A."/>
            <person name="Kaine B.P."/>
            <person name="Borodovsky M."/>
            <person name="Klenk H.-P."/>
            <person name="Fraser C.M."/>
            <person name="Smith H.O."/>
            <person name="Woese C.R."/>
            <person name="Venter J.C."/>
        </authorList>
    </citation>
    <scope>NUCLEOTIDE SEQUENCE [LARGE SCALE GENOMIC DNA]</scope>
    <source>
        <strain>ATCC 43067 / DSM 2661 / JAL-1 / JCM 10045 / NBRC 100440</strain>
    </source>
</reference>
<evidence type="ECO:0000255" key="1">
    <source>
        <dbReference type="HAMAP-Rule" id="MF_00288"/>
    </source>
</evidence>
<evidence type="ECO:0000305" key="2"/>
<accession>Q58868</accession>
<dbReference type="EC" id="2.1.1.-" evidence="1"/>
<dbReference type="EMBL" id="L77117">
    <property type="protein sequence ID" value="AAB99479.1"/>
    <property type="status" value="ALT_INIT"/>
    <property type="molecule type" value="Genomic_DNA"/>
</dbReference>
<dbReference type="PIR" id="H64483">
    <property type="entry name" value="H64483"/>
</dbReference>
<dbReference type="RefSeq" id="WP_064496838.1">
    <property type="nucleotide sequence ID" value="NC_000909.1"/>
</dbReference>
<dbReference type="SMR" id="Q58868"/>
<dbReference type="FunCoup" id="Q58868">
    <property type="interactions" value="110"/>
</dbReference>
<dbReference type="STRING" id="243232.MJ_1473"/>
<dbReference type="PaxDb" id="243232-MJ_1473"/>
<dbReference type="EnsemblBacteria" id="AAB99479">
    <property type="protein sequence ID" value="AAB99479"/>
    <property type="gene ID" value="MJ_1473"/>
</dbReference>
<dbReference type="GeneID" id="1452378"/>
<dbReference type="KEGG" id="mja:MJ_1473"/>
<dbReference type="eggNOG" id="arCOG01876">
    <property type="taxonomic scope" value="Archaea"/>
</dbReference>
<dbReference type="HOGENOM" id="CLU_040013_3_2_2"/>
<dbReference type="InParanoid" id="Q58868"/>
<dbReference type="OrthoDB" id="17656at2157"/>
<dbReference type="PhylomeDB" id="Q58868"/>
<dbReference type="UniPathway" id="UPA00051"/>
<dbReference type="Proteomes" id="UP000000805">
    <property type="component" value="Chromosome"/>
</dbReference>
<dbReference type="GO" id="GO:0003871">
    <property type="term" value="F:5-methyltetrahydropteroyltriglutamate-homocysteine S-methyltransferase activity"/>
    <property type="evidence" value="ECO:0007669"/>
    <property type="project" value="InterPro"/>
</dbReference>
<dbReference type="GO" id="GO:0008270">
    <property type="term" value="F:zinc ion binding"/>
    <property type="evidence" value="ECO:0007669"/>
    <property type="project" value="InterPro"/>
</dbReference>
<dbReference type="GO" id="GO:0009086">
    <property type="term" value="P:methionine biosynthetic process"/>
    <property type="evidence" value="ECO:0007669"/>
    <property type="project" value="UniProtKB-UniRule"/>
</dbReference>
<dbReference type="GO" id="GO:0032259">
    <property type="term" value="P:methylation"/>
    <property type="evidence" value="ECO:0007669"/>
    <property type="project" value="UniProtKB-KW"/>
</dbReference>
<dbReference type="CDD" id="cd03311">
    <property type="entry name" value="CIMS_C_terminal_like"/>
    <property type="match status" value="1"/>
</dbReference>
<dbReference type="Gene3D" id="3.20.20.210">
    <property type="match status" value="1"/>
</dbReference>
<dbReference type="HAMAP" id="MF_00288">
    <property type="entry name" value="MetE"/>
    <property type="match status" value="1"/>
</dbReference>
<dbReference type="InterPro" id="IPR002629">
    <property type="entry name" value="Met_Synth_C/arc"/>
</dbReference>
<dbReference type="InterPro" id="IPR022921">
    <property type="entry name" value="MetE_arc"/>
</dbReference>
<dbReference type="InterPro" id="IPR038071">
    <property type="entry name" value="UROD/MetE-like_sf"/>
</dbReference>
<dbReference type="NCBIfam" id="NF002119">
    <property type="entry name" value="PRK00957.1"/>
    <property type="match status" value="1"/>
</dbReference>
<dbReference type="PANTHER" id="PTHR30519">
    <property type="entry name" value="5-METHYLTETRAHYDROPTEROYLTRIGLUTAMATE--HOMOCYSTEINE METHYLTRANSFERASE"/>
    <property type="match status" value="1"/>
</dbReference>
<dbReference type="Pfam" id="PF01717">
    <property type="entry name" value="Meth_synt_2"/>
    <property type="match status" value="1"/>
</dbReference>
<dbReference type="SUPFAM" id="SSF51726">
    <property type="entry name" value="UROD/MetE-like"/>
    <property type="match status" value="1"/>
</dbReference>